<gene>
    <name evidence="1" type="primary">lpxA</name>
    <name type="ordered locus">CC_1911</name>
</gene>
<dbReference type="EC" id="2.3.1.129" evidence="1"/>
<dbReference type="EMBL" id="AE005673">
    <property type="protein sequence ID" value="AAK23886.1"/>
    <property type="molecule type" value="Genomic_DNA"/>
</dbReference>
<dbReference type="PIR" id="B87486">
    <property type="entry name" value="B87486"/>
</dbReference>
<dbReference type="RefSeq" id="NP_420718.1">
    <property type="nucleotide sequence ID" value="NC_002696.2"/>
</dbReference>
<dbReference type="RefSeq" id="WP_010919777.1">
    <property type="nucleotide sequence ID" value="NC_002696.2"/>
</dbReference>
<dbReference type="SMR" id="Q9A715"/>
<dbReference type="STRING" id="190650.CC_1911"/>
<dbReference type="EnsemblBacteria" id="AAK23886">
    <property type="protein sequence ID" value="AAK23886"/>
    <property type="gene ID" value="CC_1911"/>
</dbReference>
<dbReference type="KEGG" id="ccr:CC_1911"/>
<dbReference type="PATRIC" id="fig|190650.5.peg.1928"/>
<dbReference type="eggNOG" id="COG1043">
    <property type="taxonomic scope" value="Bacteria"/>
</dbReference>
<dbReference type="HOGENOM" id="CLU_061249_0_0_5"/>
<dbReference type="BioCyc" id="CAULO:CC1911-MONOMER"/>
<dbReference type="UniPathway" id="UPA00359">
    <property type="reaction ID" value="UER00477"/>
</dbReference>
<dbReference type="Proteomes" id="UP000001816">
    <property type="component" value="Chromosome"/>
</dbReference>
<dbReference type="GO" id="GO:0005737">
    <property type="term" value="C:cytoplasm"/>
    <property type="evidence" value="ECO:0007669"/>
    <property type="project" value="UniProtKB-SubCell"/>
</dbReference>
<dbReference type="GO" id="GO:0016020">
    <property type="term" value="C:membrane"/>
    <property type="evidence" value="ECO:0007669"/>
    <property type="project" value="GOC"/>
</dbReference>
<dbReference type="GO" id="GO:0008780">
    <property type="term" value="F:acyl-[acyl-carrier-protein]-UDP-N-acetylglucosamine O-acyltransferase activity"/>
    <property type="evidence" value="ECO:0007669"/>
    <property type="project" value="UniProtKB-UniRule"/>
</dbReference>
<dbReference type="GO" id="GO:0009245">
    <property type="term" value="P:lipid A biosynthetic process"/>
    <property type="evidence" value="ECO:0007669"/>
    <property type="project" value="UniProtKB-UniRule"/>
</dbReference>
<dbReference type="CDD" id="cd03351">
    <property type="entry name" value="LbH_UDP-GlcNAc_AT"/>
    <property type="match status" value="1"/>
</dbReference>
<dbReference type="Gene3D" id="2.160.10.10">
    <property type="entry name" value="Hexapeptide repeat proteins"/>
    <property type="match status" value="1"/>
</dbReference>
<dbReference type="Gene3D" id="1.20.1180.10">
    <property type="entry name" value="Udp N-acetylglucosamine O-acyltransferase, C-terminal domain"/>
    <property type="match status" value="1"/>
</dbReference>
<dbReference type="HAMAP" id="MF_00387">
    <property type="entry name" value="LpxA"/>
    <property type="match status" value="1"/>
</dbReference>
<dbReference type="InterPro" id="IPR029098">
    <property type="entry name" value="Acetyltransf_C"/>
</dbReference>
<dbReference type="InterPro" id="IPR037157">
    <property type="entry name" value="Acetyltransf_C_sf"/>
</dbReference>
<dbReference type="InterPro" id="IPR018357">
    <property type="entry name" value="Hexapep_transf_CS"/>
</dbReference>
<dbReference type="InterPro" id="IPR010137">
    <property type="entry name" value="Lipid_A_LpxA"/>
</dbReference>
<dbReference type="InterPro" id="IPR011004">
    <property type="entry name" value="Trimer_LpxA-like_sf"/>
</dbReference>
<dbReference type="NCBIfam" id="TIGR01852">
    <property type="entry name" value="lipid_A_lpxA"/>
    <property type="match status" value="1"/>
</dbReference>
<dbReference type="NCBIfam" id="NF003657">
    <property type="entry name" value="PRK05289.1"/>
    <property type="match status" value="1"/>
</dbReference>
<dbReference type="PANTHER" id="PTHR43480">
    <property type="entry name" value="ACYL-[ACYL-CARRIER-PROTEIN]--UDP-N-ACETYLGLUCOSAMINE O-ACYLTRANSFERASE"/>
    <property type="match status" value="1"/>
</dbReference>
<dbReference type="PANTHER" id="PTHR43480:SF1">
    <property type="entry name" value="ACYL-[ACYL-CARRIER-PROTEIN]--UDP-N-ACETYLGLUCOSAMINE O-ACYLTRANSFERASE, MITOCHONDRIAL-RELATED"/>
    <property type="match status" value="1"/>
</dbReference>
<dbReference type="Pfam" id="PF13720">
    <property type="entry name" value="Acetyltransf_11"/>
    <property type="match status" value="1"/>
</dbReference>
<dbReference type="PIRSF" id="PIRSF000456">
    <property type="entry name" value="UDP-GlcNAc_acltr"/>
    <property type="match status" value="1"/>
</dbReference>
<dbReference type="SUPFAM" id="SSF51161">
    <property type="entry name" value="Trimeric LpxA-like enzymes"/>
    <property type="match status" value="1"/>
</dbReference>
<dbReference type="PROSITE" id="PS00101">
    <property type="entry name" value="HEXAPEP_TRANSFERASES"/>
    <property type="match status" value="1"/>
</dbReference>
<keyword id="KW-0012">Acyltransferase</keyword>
<keyword id="KW-0963">Cytoplasm</keyword>
<keyword id="KW-0441">Lipid A biosynthesis</keyword>
<keyword id="KW-0444">Lipid biosynthesis</keyword>
<keyword id="KW-0443">Lipid metabolism</keyword>
<keyword id="KW-1185">Reference proteome</keyword>
<keyword id="KW-0677">Repeat</keyword>
<keyword id="KW-0808">Transferase</keyword>
<evidence type="ECO:0000255" key="1">
    <source>
        <dbReference type="HAMAP-Rule" id="MF_00387"/>
    </source>
</evidence>
<name>LPXA_CAUVC</name>
<protein>
    <recommendedName>
        <fullName evidence="1">Acyl-[acyl-carrier-protein]--UDP-N-acetylglucosamine O-acyltransferase</fullName>
        <shortName evidence="1">UDP-N-acetylglucosamine acyltransferase</shortName>
        <ecNumber evidence="1">2.3.1.129</ecNumber>
    </recommendedName>
</protein>
<feature type="chain" id="PRO_0000188039" description="Acyl-[acyl-carrier-protein]--UDP-N-acetylglucosamine O-acyltransferase">
    <location>
        <begin position="1"/>
        <end position="263"/>
    </location>
</feature>
<accession>Q9A715</accession>
<reference key="1">
    <citation type="journal article" date="2001" name="Proc. Natl. Acad. Sci. U.S.A.">
        <title>Complete genome sequence of Caulobacter crescentus.</title>
        <authorList>
            <person name="Nierman W.C."/>
            <person name="Feldblyum T.V."/>
            <person name="Laub M.T."/>
            <person name="Paulsen I.T."/>
            <person name="Nelson K.E."/>
            <person name="Eisen J.A."/>
            <person name="Heidelberg J.F."/>
            <person name="Alley M.R.K."/>
            <person name="Ohta N."/>
            <person name="Maddock J.R."/>
            <person name="Potocka I."/>
            <person name="Nelson W.C."/>
            <person name="Newton A."/>
            <person name="Stephens C."/>
            <person name="Phadke N.D."/>
            <person name="Ely B."/>
            <person name="DeBoy R.T."/>
            <person name="Dodson R.J."/>
            <person name="Durkin A.S."/>
            <person name="Gwinn M.L."/>
            <person name="Haft D.H."/>
            <person name="Kolonay J.F."/>
            <person name="Smit J."/>
            <person name="Craven M.B."/>
            <person name="Khouri H.M."/>
            <person name="Shetty J."/>
            <person name="Berry K.J."/>
            <person name="Utterback T.R."/>
            <person name="Tran K."/>
            <person name="Wolf A.M."/>
            <person name="Vamathevan J.J."/>
            <person name="Ermolaeva M.D."/>
            <person name="White O."/>
            <person name="Salzberg S.L."/>
            <person name="Venter J.C."/>
            <person name="Shapiro L."/>
            <person name="Fraser C.M."/>
        </authorList>
    </citation>
    <scope>NUCLEOTIDE SEQUENCE [LARGE SCALE GENOMIC DNA]</scope>
    <source>
        <strain>ATCC 19089 / CIP 103742 / CB 15</strain>
    </source>
</reference>
<comment type="function">
    <text evidence="1">Involved in the biosynthesis of lipid A, a phosphorylated glycolipid that anchors the lipopolysaccharide to the outer membrane of the cell.</text>
</comment>
<comment type="catalytic activity">
    <reaction evidence="1">
        <text>a (3R)-hydroxyacyl-[ACP] + UDP-N-acetyl-alpha-D-glucosamine = a UDP-3-O-[(3R)-3-hydroxyacyl]-N-acetyl-alpha-D-glucosamine + holo-[ACP]</text>
        <dbReference type="Rhea" id="RHEA:67812"/>
        <dbReference type="Rhea" id="RHEA-COMP:9685"/>
        <dbReference type="Rhea" id="RHEA-COMP:9945"/>
        <dbReference type="ChEBI" id="CHEBI:57705"/>
        <dbReference type="ChEBI" id="CHEBI:64479"/>
        <dbReference type="ChEBI" id="CHEBI:78827"/>
        <dbReference type="ChEBI" id="CHEBI:173225"/>
        <dbReference type="EC" id="2.3.1.129"/>
    </reaction>
</comment>
<comment type="pathway">
    <text evidence="1">Glycolipid biosynthesis; lipid IV(A) biosynthesis; lipid IV(A) from (3R)-3-hydroxytetradecanoyl-[acyl-carrier-protein] and UDP-N-acetyl-alpha-D-glucosamine: step 1/6.</text>
</comment>
<comment type="subunit">
    <text evidence="1">Homotrimer.</text>
</comment>
<comment type="subcellular location">
    <subcellularLocation>
        <location evidence="1">Cytoplasm</location>
    </subcellularLocation>
</comment>
<comment type="similarity">
    <text evidence="1">Belongs to the transferase hexapeptide repeat family. LpxA subfamily.</text>
</comment>
<proteinExistence type="inferred from homology"/>
<organism>
    <name type="scientific">Caulobacter vibrioides (strain ATCC 19089 / CIP 103742 / CB 15)</name>
    <name type="common">Caulobacter crescentus</name>
    <dbReference type="NCBI Taxonomy" id="190650"/>
    <lineage>
        <taxon>Bacteria</taxon>
        <taxon>Pseudomonadati</taxon>
        <taxon>Pseudomonadota</taxon>
        <taxon>Alphaproteobacteria</taxon>
        <taxon>Caulobacterales</taxon>
        <taxon>Caulobacteraceae</taxon>
        <taxon>Caulobacter</taxon>
    </lineage>
</organism>
<sequence length="263" mass="27853">MSIHPTAIIAPEAKLAPDVEVGPFSIVGPDVTLAAGVRLLSHVVVEGATTIGEGCVVHSFANLGGPPQHLGHKGERTELIIGPRNIIREHVTMHTGTASGKGVTTIGSDGLYMVGSHVAHDCTVGDFVVLAKGATLGGHVAIGDYVFMGGLAAAHQFSRIGRYSFIGGLAAVTKDVIPYGSVWGNHAHLEGLNLVGLKRRGFPRETINALRAAYRLMFADEGTFQERLDDVAEIHAGNAEVMEIVDFIRTDANRPLCLPEREV</sequence>